<comment type="function">
    <text evidence="1">Catalyzes the reversible interconversion of serine and glycine with tetrahydrofolate (THF) serving as the one-carbon carrier. This reaction serves as the major source of one-carbon groups required for the biosynthesis of purines, thymidylate, methionine, and other important biomolecules. Also exhibits THF-independent aldolase activity toward beta-hydroxyamino acids, producing glycine and aldehydes, via a retro-aldol mechanism.</text>
</comment>
<comment type="catalytic activity">
    <reaction evidence="1">
        <text>(6R)-5,10-methylene-5,6,7,8-tetrahydrofolate + glycine + H2O = (6S)-5,6,7,8-tetrahydrofolate + L-serine</text>
        <dbReference type="Rhea" id="RHEA:15481"/>
        <dbReference type="ChEBI" id="CHEBI:15377"/>
        <dbReference type="ChEBI" id="CHEBI:15636"/>
        <dbReference type="ChEBI" id="CHEBI:33384"/>
        <dbReference type="ChEBI" id="CHEBI:57305"/>
        <dbReference type="ChEBI" id="CHEBI:57453"/>
        <dbReference type="EC" id="2.1.2.1"/>
    </reaction>
</comment>
<comment type="cofactor">
    <cofactor evidence="1">
        <name>pyridoxal 5'-phosphate</name>
        <dbReference type="ChEBI" id="CHEBI:597326"/>
    </cofactor>
</comment>
<comment type="pathway">
    <text evidence="1">One-carbon metabolism; tetrahydrofolate interconversion.</text>
</comment>
<comment type="pathway">
    <text evidence="1">Amino-acid biosynthesis; glycine biosynthesis; glycine from L-serine: step 1/1.</text>
</comment>
<comment type="subunit">
    <text evidence="1">Homodimer.</text>
</comment>
<comment type="subcellular location">
    <subcellularLocation>
        <location evidence="1">Cytoplasm</location>
    </subcellularLocation>
</comment>
<comment type="similarity">
    <text evidence="1">Belongs to the SHMT family.</text>
</comment>
<evidence type="ECO:0000255" key="1">
    <source>
        <dbReference type="HAMAP-Rule" id="MF_00051"/>
    </source>
</evidence>
<sequence length="417" mass="45422">MLKREMNIADYDADLWRAMEQEVVRQEEHIELIASENYTSPRVMQAQGSQLTNKYAEGYPGKRYYGGCEYVDVVEQLAIDRAKALFGADYANVQPHSGSQANVAVYSALLKPGDTVLGMNLAHGGHLTHGSPVNFSGKLYNIVPYGIDESGQIDYEDLARQAEIHKPKMIIGGFSAYSGIVDWAKMREIADSIDAWFFVDMAHVAGLVAAGVYPNPVPHAHIVTTTTHKTLAGPRGGLILAKGGDEDLYKKLNSSVFPGNQGGPLMHVIAGKAVALKEAMEPEFKIYQQQVAKNAKAMVAVFLERGYKVVSGGTDNHLFLLDLVDKDITGKDADAALGRANITVNKNSVPNDPKSPFVTSGVRIGSPAITRRGFKEAESRELAGWMCDVLDNINDEATIERVKQKVLAICARLPVYA</sequence>
<gene>
    <name evidence="1" type="primary">glyA</name>
    <name type="ordered locus">YPO2907</name>
    <name type="ordered locus">y1322</name>
    <name type="ordered locus">YP_2548</name>
</gene>
<reference key="1">
    <citation type="journal article" date="2001" name="Nature">
        <title>Genome sequence of Yersinia pestis, the causative agent of plague.</title>
        <authorList>
            <person name="Parkhill J."/>
            <person name="Wren B.W."/>
            <person name="Thomson N.R."/>
            <person name="Titball R.W."/>
            <person name="Holden M.T.G."/>
            <person name="Prentice M.B."/>
            <person name="Sebaihia M."/>
            <person name="James K.D."/>
            <person name="Churcher C.M."/>
            <person name="Mungall K.L."/>
            <person name="Baker S."/>
            <person name="Basham D."/>
            <person name="Bentley S.D."/>
            <person name="Brooks K."/>
            <person name="Cerdeno-Tarraga A.-M."/>
            <person name="Chillingworth T."/>
            <person name="Cronin A."/>
            <person name="Davies R.M."/>
            <person name="Davis P."/>
            <person name="Dougan G."/>
            <person name="Feltwell T."/>
            <person name="Hamlin N."/>
            <person name="Holroyd S."/>
            <person name="Jagels K."/>
            <person name="Karlyshev A.V."/>
            <person name="Leather S."/>
            <person name="Moule S."/>
            <person name="Oyston P.C.F."/>
            <person name="Quail M.A."/>
            <person name="Rutherford K.M."/>
            <person name="Simmonds M."/>
            <person name="Skelton J."/>
            <person name="Stevens K."/>
            <person name="Whitehead S."/>
            <person name="Barrell B.G."/>
        </authorList>
    </citation>
    <scope>NUCLEOTIDE SEQUENCE [LARGE SCALE GENOMIC DNA]</scope>
    <source>
        <strain>CO-92 / Biovar Orientalis</strain>
    </source>
</reference>
<reference key="2">
    <citation type="journal article" date="2002" name="J. Bacteriol.">
        <title>Genome sequence of Yersinia pestis KIM.</title>
        <authorList>
            <person name="Deng W."/>
            <person name="Burland V."/>
            <person name="Plunkett G. III"/>
            <person name="Boutin A."/>
            <person name="Mayhew G.F."/>
            <person name="Liss P."/>
            <person name="Perna N.T."/>
            <person name="Rose D.J."/>
            <person name="Mau B."/>
            <person name="Zhou S."/>
            <person name="Schwartz D.C."/>
            <person name="Fetherston J.D."/>
            <person name="Lindler L.E."/>
            <person name="Brubaker R.R."/>
            <person name="Plano G.V."/>
            <person name="Straley S.C."/>
            <person name="McDonough K.A."/>
            <person name="Nilles M.L."/>
            <person name="Matson J.S."/>
            <person name="Blattner F.R."/>
            <person name="Perry R.D."/>
        </authorList>
    </citation>
    <scope>NUCLEOTIDE SEQUENCE [LARGE SCALE GENOMIC DNA]</scope>
    <source>
        <strain>KIM10+ / Biovar Mediaevalis</strain>
    </source>
</reference>
<reference key="3">
    <citation type="journal article" date="2004" name="DNA Res.">
        <title>Complete genome sequence of Yersinia pestis strain 91001, an isolate avirulent to humans.</title>
        <authorList>
            <person name="Song Y."/>
            <person name="Tong Z."/>
            <person name="Wang J."/>
            <person name="Wang L."/>
            <person name="Guo Z."/>
            <person name="Han Y."/>
            <person name="Zhang J."/>
            <person name="Pei D."/>
            <person name="Zhou D."/>
            <person name="Qin H."/>
            <person name="Pang X."/>
            <person name="Han Y."/>
            <person name="Zhai J."/>
            <person name="Li M."/>
            <person name="Cui B."/>
            <person name="Qi Z."/>
            <person name="Jin L."/>
            <person name="Dai R."/>
            <person name="Chen F."/>
            <person name="Li S."/>
            <person name="Ye C."/>
            <person name="Du Z."/>
            <person name="Lin W."/>
            <person name="Wang J."/>
            <person name="Yu J."/>
            <person name="Yang H."/>
            <person name="Wang J."/>
            <person name="Huang P."/>
            <person name="Yang R."/>
        </authorList>
    </citation>
    <scope>NUCLEOTIDE SEQUENCE [LARGE SCALE GENOMIC DNA]</scope>
    <source>
        <strain>91001 / Biovar Mediaevalis</strain>
    </source>
</reference>
<keyword id="KW-0028">Amino-acid biosynthesis</keyword>
<keyword id="KW-0963">Cytoplasm</keyword>
<keyword id="KW-0554">One-carbon metabolism</keyword>
<keyword id="KW-0663">Pyridoxal phosphate</keyword>
<keyword id="KW-1185">Reference proteome</keyword>
<keyword id="KW-0808">Transferase</keyword>
<protein>
    <recommendedName>
        <fullName evidence="1">Serine hydroxymethyltransferase</fullName>
        <shortName evidence="1">SHMT</shortName>
        <shortName evidence="1">Serine methylase</shortName>
        <ecNumber evidence="1">2.1.2.1</ecNumber>
    </recommendedName>
</protein>
<dbReference type="EC" id="2.1.2.1" evidence="1"/>
<dbReference type="EMBL" id="AL590842">
    <property type="protein sequence ID" value="CAL21518.1"/>
    <property type="molecule type" value="Genomic_DNA"/>
</dbReference>
<dbReference type="EMBL" id="AE009952">
    <property type="protein sequence ID" value="AAM84895.1"/>
    <property type="molecule type" value="Genomic_DNA"/>
</dbReference>
<dbReference type="EMBL" id="AE017042">
    <property type="protein sequence ID" value="AAS62744.1"/>
    <property type="molecule type" value="Genomic_DNA"/>
</dbReference>
<dbReference type="PIR" id="AC0354">
    <property type="entry name" value="AC0354"/>
</dbReference>
<dbReference type="RefSeq" id="WP_002211552.1">
    <property type="nucleotide sequence ID" value="NZ_WUCM01000090.1"/>
</dbReference>
<dbReference type="RefSeq" id="YP_002347841.1">
    <property type="nucleotide sequence ID" value="NC_003143.1"/>
</dbReference>
<dbReference type="SMR" id="Q8ZCR1"/>
<dbReference type="IntAct" id="Q8ZCR1">
    <property type="interactions" value="3"/>
</dbReference>
<dbReference type="STRING" id="214092.YPO2907"/>
<dbReference type="PaxDb" id="214092-YPO2907"/>
<dbReference type="DNASU" id="1146269"/>
<dbReference type="EnsemblBacteria" id="AAS62744">
    <property type="protein sequence ID" value="AAS62744"/>
    <property type="gene ID" value="YP_2548"/>
</dbReference>
<dbReference type="GeneID" id="57975864"/>
<dbReference type="KEGG" id="ype:YPO2907"/>
<dbReference type="KEGG" id="ypk:y1322"/>
<dbReference type="KEGG" id="ypm:YP_2548"/>
<dbReference type="PATRIC" id="fig|214092.21.peg.3357"/>
<dbReference type="eggNOG" id="COG0112">
    <property type="taxonomic scope" value="Bacteria"/>
</dbReference>
<dbReference type="HOGENOM" id="CLU_022477_2_1_6"/>
<dbReference type="OMA" id="CQFANVQ"/>
<dbReference type="OrthoDB" id="9803846at2"/>
<dbReference type="UniPathway" id="UPA00193"/>
<dbReference type="UniPathway" id="UPA00288">
    <property type="reaction ID" value="UER01023"/>
</dbReference>
<dbReference type="Proteomes" id="UP000000815">
    <property type="component" value="Chromosome"/>
</dbReference>
<dbReference type="Proteomes" id="UP000001019">
    <property type="component" value="Chromosome"/>
</dbReference>
<dbReference type="Proteomes" id="UP000002490">
    <property type="component" value="Chromosome"/>
</dbReference>
<dbReference type="GO" id="GO:0005737">
    <property type="term" value="C:cytoplasm"/>
    <property type="evidence" value="ECO:0000318"/>
    <property type="project" value="GO_Central"/>
</dbReference>
<dbReference type="GO" id="GO:0005829">
    <property type="term" value="C:cytosol"/>
    <property type="evidence" value="ECO:0000318"/>
    <property type="project" value="GO_Central"/>
</dbReference>
<dbReference type="GO" id="GO:0004372">
    <property type="term" value="F:glycine hydroxymethyltransferase activity"/>
    <property type="evidence" value="ECO:0000318"/>
    <property type="project" value="GO_Central"/>
</dbReference>
<dbReference type="GO" id="GO:0030170">
    <property type="term" value="F:pyridoxal phosphate binding"/>
    <property type="evidence" value="ECO:0000318"/>
    <property type="project" value="GO_Central"/>
</dbReference>
<dbReference type="GO" id="GO:0019264">
    <property type="term" value="P:glycine biosynthetic process from serine"/>
    <property type="evidence" value="ECO:0000318"/>
    <property type="project" value="GO_Central"/>
</dbReference>
<dbReference type="GO" id="GO:0035999">
    <property type="term" value="P:tetrahydrofolate interconversion"/>
    <property type="evidence" value="ECO:0007669"/>
    <property type="project" value="UniProtKB-UniRule"/>
</dbReference>
<dbReference type="GO" id="GO:0046653">
    <property type="term" value="P:tetrahydrofolate metabolic process"/>
    <property type="evidence" value="ECO:0000318"/>
    <property type="project" value="GO_Central"/>
</dbReference>
<dbReference type="CDD" id="cd00378">
    <property type="entry name" value="SHMT"/>
    <property type="match status" value="1"/>
</dbReference>
<dbReference type="FunFam" id="3.40.640.10:FF:000001">
    <property type="entry name" value="Serine hydroxymethyltransferase"/>
    <property type="match status" value="1"/>
</dbReference>
<dbReference type="FunFam" id="3.90.1150.10:FF:000003">
    <property type="entry name" value="Serine hydroxymethyltransferase"/>
    <property type="match status" value="1"/>
</dbReference>
<dbReference type="Gene3D" id="3.90.1150.10">
    <property type="entry name" value="Aspartate Aminotransferase, domain 1"/>
    <property type="match status" value="1"/>
</dbReference>
<dbReference type="Gene3D" id="3.40.640.10">
    <property type="entry name" value="Type I PLP-dependent aspartate aminotransferase-like (Major domain)"/>
    <property type="match status" value="1"/>
</dbReference>
<dbReference type="HAMAP" id="MF_00051">
    <property type="entry name" value="SHMT"/>
    <property type="match status" value="1"/>
</dbReference>
<dbReference type="InterPro" id="IPR015424">
    <property type="entry name" value="PyrdxlP-dep_Trfase"/>
</dbReference>
<dbReference type="InterPro" id="IPR015421">
    <property type="entry name" value="PyrdxlP-dep_Trfase_major"/>
</dbReference>
<dbReference type="InterPro" id="IPR015422">
    <property type="entry name" value="PyrdxlP-dep_Trfase_small"/>
</dbReference>
<dbReference type="InterPro" id="IPR001085">
    <property type="entry name" value="Ser_HO-MeTrfase"/>
</dbReference>
<dbReference type="InterPro" id="IPR049943">
    <property type="entry name" value="Ser_HO-MeTrfase-like"/>
</dbReference>
<dbReference type="InterPro" id="IPR019798">
    <property type="entry name" value="Ser_HO-MeTrfase_PLP_BS"/>
</dbReference>
<dbReference type="InterPro" id="IPR039429">
    <property type="entry name" value="SHMT-like_dom"/>
</dbReference>
<dbReference type="NCBIfam" id="NF000586">
    <property type="entry name" value="PRK00011.1"/>
    <property type="match status" value="1"/>
</dbReference>
<dbReference type="PANTHER" id="PTHR11680">
    <property type="entry name" value="SERINE HYDROXYMETHYLTRANSFERASE"/>
    <property type="match status" value="1"/>
</dbReference>
<dbReference type="PANTHER" id="PTHR11680:SF50">
    <property type="entry name" value="SERINE HYDROXYMETHYLTRANSFERASE"/>
    <property type="match status" value="1"/>
</dbReference>
<dbReference type="Pfam" id="PF00464">
    <property type="entry name" value="SHMT"/>
    <property type="match status" value="1"/>
</dbReference>
<dbReference type="PIRSF" id="PIRSF000412">
    <property type="entry name" value="SHMT"/>
    <property type="match status" value="1"/>
</dbReference>
<dbReference type="SUPFAM" id="SSF53383">
    <property type="entry name" value="PLP-dependent transferases"/>
    <property type="match status" value="1"/>
</dbReference>
<dbReference type="PROSITE" id="PS00096">
    <property type="entry name" value="SHMT"/>
    <property type="match status" value="1"/>
</dbReference>
<organism>
    <name type="scientific">Yersinia pestis</name>
    <dbReference type="NCBI Taxonomy" id="632"/>
    <lineage>
        <taxon>Bacteria</taxon>
        <taxon>Pseudomonadati</taxon>
        <taxon>Pseudomonadota</taxon>
        <taxon>Gammaproteobacteria</taxon>
        <taxon>Enterobacterales</taxon>
        <taxon>Yersiniaceae</taxon>
        <taxon>Yersinia</taxon>
    </lineage>
</organism>
<feature type="chain" id="PRO_0000113705" description="Serine hydroxymethyltransferase">
    <location>
        <begin position="1"/>
        <end position="417"/>
    </location>
</feature>
<feature type="binding site" evidence="1">
    <location>
        <position position="121"/>
    </location>
    <ligand>
        <name>(6S)-5,6,7,8-tetrahydrofolate</name>
        <dbReference type="ChEBI" id="CHEBI:57453"/>
    </ligand>
</feature>
<feature type="binding site" evidence="1">
    <location>
        <begin position="125"/>
        <end position="127"/>
    </location>
    <ligand>
        <name>(6S)-5,6,7,8-tetrahydrofolate</name>
        <dbReference type="ChEBI" id="CHEBI:57453"/>
    </ligand>
</feature>
<feature type="binding site" evidence="1">
    <location>
        <begin position="355"/>
        <end position="357"/>
    </location>
    <ligand>
        <name>(6S)-5,6,7,8-tetrahydrofolate</name>
        <dbReference type="ChEBI" id="CHEBI:57453"/>
    </ligand>
</feature>
<feature type="site" description="Plays an important role in substrate specificity" evidence="1">
    <location>
        <position position="228"/>
    </location>
</feature>
<feature type="modified residue" description="N6-(pyridoxal phosphate)lysine" evidence="1">
    <location>
        <position position="229"/>
    </location>
</feature>
<name>GLYA_YERPE</name>
<proteinExistence type="inferred from homology"/>
<accession>Q8ZCR1</accession>
<accession>Q0WCZ7</accession>